<accession>Q821L2</accession>
<keyword id="KW-0963">Cytoplasm</keyword>
<keyword id="KW-0342">GTP-binding</keyword>
<keyword id="KW-0378">Hydrolase</keyword>
<keyword id="KW-0460">Magnesium</keyword>
<keyword id="KW-0479">Metal-binding</keyword>
<keyword id="KW-0547">Nucleotide-binding</keyword>
<keyword id="KW-0630">Potassium</keyword>
<keyword id="KW-0819">tRNA processing</keyword>
<sequence>MIKNDTIAAIATPPGEGSIAIVRISGPEAIQITDKIFSGSVPSFASHTAHLGIVNHKDRQIDQVLLLIMRAPRSFTGEDVIELQCHGGYFSCSQILEALVSEGARPALPGEFSQRAFLNGKIDLIQAEAIQNIIAADNLDAFFIAQNHFQGHFSKKIQLISSLIVESLAFIEVLADFPEEEQPDMDVPKQRLNEAMLIIEDLISSFDEGQRLAQGTSIVLAGHPNVGKSSLLNALTNKNRAIVTDIPGTTRDILEENWTLQGKRIRLIDSAGQRETDNLVEQEGIERAISAMEQSEGILWVMDATQPPPSLPEILFQKPSLLLWNKSDLASPPQLDTSLPQLAISAKTGEGIFELKQFIQKWMQQQQLGKNAKVFLVSSRHHTILQQMRSYLLSAKEGLLAQLPPELIALELRQALQATGNLSGSEVNETILGEIFSRFCIGK</sequence>
<protein>
    <recommendedName>
        <fullName evidence="1">tRNA modification GTPase MnmE</fullName>
        <ecNumber evidence="1">3.6.-.-</ecNumber>
    </recommendedName>
</protein>
<evidence type="ECO:0000255" key="1">
    <source>
        <dbReference type="HAMAP-Rule" id="MF_00379"/>
    </source>
</evidence>
<feature type="chain" id="PRO_0000188863" description="tRNA modification GTPase MnmE">
    <location>
        <begin position="1"/>
        <end position="443"/>
    </location>
</feature>
<feature type="domain" description="TrmE-type G">
    <location>
        <begin position="215"/>
        <end position="364"/>
    </location>
</feature>
<feature type="binding site" evidence="1">
    <location>
        <position position="23"/>
    </location>
    <ligand>
        <name>(6S)-5-formyl-5,6,7,8-tetrahydrofolate</name>
        <dbReference type="ChEBI" id="CHEBI:57457"/>
    </ligand>
</feature>
<feature type="binding site" evidence="1">
    <location>
        <position position="82"/>
    </location>
    <ligand>
        <name>(6S)-5-formyl-5,6,7,8-tetrahydrofolate</name>
        <dbReference type="ChEBI" id="CHEBI:57457"/>
    </ligand>
</feature>
<feature type="binding site" evidence="1">
    <location>
        <position position="121"/>
    </location>
    <ligand>
        <name>(6S)-5-formyl-5,6,7,8-tetrahydrofolate</name>
        <dbReference type="ChEBI" id="CHEBI:57457"/>
    </ligand>
</feature>
<feature type="binding site" evidence="1">
    <location>
        <begin position="225"/>
        <end position="230"/>
    </location>
    <ligand>
        <name>GTP</name>
        <dbReference type="ChEBI" id="CHEBI:37565"/>
    </ligand>
</feature>
<feature type="binding site" evidence="1">
    <location>
        <position position="225"/>
    </location>
    <ligand>
        <name>K(+)</name>
        <dbReference type="ChEBI" id="CHEBI:29103"/>
    </ligand>
</feature>
<feature type="binding site" evidence="1">
    <location>
        <position position="229"/>
    </location>
    <ligand>
        <name>Mg(2+)</name>
        <dbReference type="ChEBI" id="CHEBI:18420"/>
    </ligand>
</feature>
<feature type="binding site" evidence="1">
    <location>
        <begin position="244"/>
        <end position="250"/>
    </location>
    <ligand>
        <name>GTP</name>
        <dbReference type="ChEBI" id="CHEBI:37565"/>
    </ligand>
</feature>
<feature type="binding site" evidence="1">
    <location>
        <position position="244"/>
    </location>
    <ligand>
        <name>K(+)</name>
        <dbReference type="ChEBI" id="CHEBI:29103"/>
    </ligand>
</feature>
<feature type="binding site" evidence="1">
    <location>
        <position position="246"/>
    </location>
    <ligand>
        <name>K(+)</name>
        <dbReference type="ChEBI" id="CHEBI:29103"/>
    </ligand>
</feature>
<feature type="binding site" evidence="1">
    <location>
        <position position="249"/>
    </location>
    <ligand>
        <name>K(+)</name>
        <dbReference type="ChEBI" id="CHEBI:29103"/>
    </ligand>
</feature>
<feature type="binding site" evidence="1">
    <location>
        <position position="250"/>
    </location>
    <ligand>
        <name>Mg(2+)</name>
        <dbReference type="ChEBI" id="CHEBI:18420"/>
    </ligand>
</feature>
<feature type="binding site" evidence="1">
    <location>
        <begin position="269"/>
        <end position="272"/>
    </location>
    <ligand>
        <name>GTP</name>
        <dbReference type="ChEBI" id="CHEBI:37565"/>
    </ligand>
</feature>
<feature type="binding site" evidence="1">
    <location>
        <position position="443"/>
    </location>
    <ligand>
        <name>(6S)-5-formyl-5,6,7,8-tetrahydrofolate</name>
        <dbReference type="ChEBI" id="CHEBI:57457"/>
    </ligand>
</feature>
<gene>
    <name evidence="1" type="primary">mnmE</name>
    <name evidence="1" type="synonym">thdF</name>
    <name evidence="1" type="synonym">trmE</name>
    <name type="ordered locus">CCA_00928</name>
</gene>
<comment type="function">
    <text evidence="1">Exhibits a very high intrinsic GTPase hydrolysis rate. Involved in the addition of a carboxymethylaminomethyl (cmnm) group at the wobble position (U34) of certain tRNAs, forming tRNA-cmnm(5)s(2)U34.</text>
</comment>
<comment type="cofactor">
    <cofactor evidence="1">
        <name>K(+)</name>
        <dbReference type="ChEBI" id="CHEBI:29103"/>
    </cofactor>
    <text evidence="1">Binds 1 potassium ion per subunit.</text>
</comment>
<comment type="subunit">
    <text evidence="1">Homodimer. Heterotetramer of two MnmE and two MnmG subunits.</text>
</comment>
<comment type="subcellular location">
    <subcellularLocation>
        <location evidence="1">Cytoplasm</location>
    </subcellularLocation>
</comment>
<comment type="similarity">
    <text evidence="1">Belongs to the TRAFAC class TrmE-Era-EngA-EngB-Septin-like GTPase superfamily. TrmE GTPase family.</text>
</comment>
<reference key="1">
    <citation type="journal article" date="2003" name="Nucleic Acids Res.">
        <title>Genome sequence of Chlamydophila caviae (Chlamydia psittaci GPIC): examining the role of niche-specific genes in the evolution of the Chlamydiaceae.</title>
        <authorList>
            <person name="Read T.D."/>
            <person name="Myers G.S.A."/>
            <person name="Brunham R.C."/>
            <person name="Nelson W.C."/>
            <person name="Paulsen I.T."/>
            <person name="Heidelberg J.F."/>
            <person name="Holtzapple E.K."/>
            <person name="Khouri H.M."/>
            <person name="Federova N.B."/>
            <person name="Carty H.A."/>
            <person name="Umayam L.A."/>
            <person name="Haft D.H."/>
            <person name="Peterson J.D."/>
            <person name="Beanan M.J."/>
            <person name="White O."/>
            <person name="Salzberg S.L."/>
            <person name="Hsia R.-C."/>
            <person name="McClarty G."/>
            <person name="Rank R.G."/>
            <person name="Bavoil P.M."/>
            <person name="Fraser C.M."/>
        </authorList>
    </citation>
    <scope>NUCLEOTIDE SEQUENCE [LARGE SCALE GENOMIC DNA]</scope>
    <source>
        <strain>ATCC VR-813 / DSM 19441 / 03DC25 / GPIC</strain>
    </source>
</reference>
<organism>
    <name type="scientific">Chlamydia caviae (strain ATCC VR-813 / DSM 19441 / 03DC25 / GPIC)</name>
    <name type="common">Chlamydophila caviae</name>
    <dbReference type="NCBI Taxonomy" id="227941"/>
    <lineage>
        <taxon>Bacteria</taxon>
        <taxon>Pseudomonadati</taxon>
        <taxon>Chlamydiota</taxon>
        <taxon>Chlamydiia</taxon>
        <taxon>Chlamydiales</taxon>
        <taxon>Chlamydiaceae</taxon>
        <taxon>Chlamydia/Chlamydophila group</taxon>
        <taxon>Chlamydia</taxon>
    </lineage>
</organism>
<proteinExistence type="inferred from homology"/>
<dbReference type="EC" id="3.6.-.-" evidence="1"/>
<dbReference type="EMBL" id="AE015925">
    <property type="protein sequence ID" value="AAP05667.1"/>
    <property type="molecule type" value="Genomic_DNA"/>
</dbReference>
<dbReference type="RefSeq" id="WP_011006880.1">
    <property type="nucleotide sequence ID" value="NC_003361.3"/>
</dbReference>
<dbReference type="SMR" id="Q821L2"/>
<dbReference type="STRING" id="227941.CCA_00928"/>
<dbReference type="KEGG" id="cca:CCA_00928"/>
<dbReference type="eggNOG" id="COG0486">
    <property type="taxonomic scope" value="Bacteria"/>
</dbReference>
<dbReference type="HOGENOM" id="CLU_019624_4_1_0"/>
<dbReference type="OrthoDB" id="9805918at2"/>
<dbReference type="Proteomes" id="UP000002193">
    <property type="component" value="Chromosome"/>
</dbReference>
<dbReference type="GO" id="GO:0005829">
    <property type="term" value="C:cytosol"/>
    <property type="evidence" value="ECO:0007669"/>
    <property type="project" value="TreeGrafter"/>
</dbReference>
<dbReference type="GO" id="GO:0005525">
    <property type="term" value="F:GTP binding"/>
    <property type="evidence" value="ECO:0007669"/>
    <property type="project" value="UniProtKB-UniRule"/>
</dbReference>
<dbReference type="GO" id="GO:0003924">
    <property type="term" value="F:GTPase activity"/>
    <property type="evidence" value="ECO:0007669"/>
    <property type="project" value="UniProtKB-UniRule"/>
</dbReference>
<dbReference type="GO" id="GO:0046872">
    <property type="term" value="F:metal ion binding"/>
    <property type="evidence" value="ECO:0007669"/>
    <property type="project" value="UniProtKB-KW"/>
</dbReference>
<dbReference type="GO" id="GO:0030488">
    <property type="term" value="P:tRNA methylation"/>
    <property type="evidence" value="ECO:0007669"/>
    <property type="project" value="TreeGrafter"/>
</dbReference>
<dbReference type="GO" id="GO:0002098">
    <property type="term" value="P:tRNA wobble uridine modification"/>
    <property type="evidence" value="ECO:0007669"/>
    <property type="project" value="TreeGrafter"/>
</dbReference>
<dbReference type="CDD" id="cd04164">
    <property type="entry name" value="trmE"/>
    <property type="match status" value="1"/>
</dbReference>
<dbReference type="CDD" id="cd14858">
    <property type="entry name" value="TrmE_N"/>
    <property type="match status" value="1"/>
</dbReference>
<dbReference type="FunFam" id="3.30.1360.120:FF:000003">
    <property type="entry name" value="tRNA modification GTPase MnmE"/>
    <property type="match status" value="1"/>
</dbReference>
<dbReference type="FunFam" id="3.40.50.300:FF:001376">
    <property type="entry name" value="tRNA modification GTPase MnmE"/>
    <property type="match status" value="1"/>
</dbReference>
<dbReference type="Gene3D" id="3.40.50.300">
    <property type="entry name" value="P-loop containing nucleotide triphosphate hydrolases"/>
    <property type="match status" value="1"/>
</dbReference>
<dbReference type="Gene3D" id="3.30.1360.120">
    <property type="entry name" value="Probable tRNA modification gtpase trme, domain 1"/>
    <property type="match status" value="1"/>
</dbReference>
<dbReference type="Gene3D" id="1.20.120.430">
    <property type="entry name" value="tRNA modification GTPase MnmE domain 2"/>
    <property type="match status" value="1"/>
</dbReference>
<dbReference type="HAMAP" id="MF_00379">
    <property type="entry name" value="GTPase_MnmE"/>
    <property type="match status" value="1"/>
</dbReference>
<dbReference type="InterPro" id="IPR031168">
    <property type="entry name" value="G_TrmE"/>
</dbReference>
<dbReference type="InterPro" id="IPR006073">
    <property type="entry name" value="GTP-bd"/>
</dbReference>
<dbReference type="InterPro" id="IPR018948">
    <property type="entry name" value="GTP-bd_TrmE_N"/>
</dbReference>
<dbReference type="InterPro" id="IPR004520">
    <property type="entry name" value="GTPase_MnmE"/>
</dbReference>
<dbReference type="InterPro" id="IPR027368">
    <property type="entry name" value="MnmE_dom2"/>
</dbReference>
<dbReference type="InterPro" id="IPR025867">
    <property type="entry name" value="MnmE_helical"/>
</dbReference>
<dbReference type="InterPro" id="IPR027417">
    <property type="entry name" value="P-loop_NTPase"/>
</dbReference>
<dbReference type="InterPro" id="IPR005225">
    <property type="entry name" value="Small_GTP-bd"/>
</dbReference>
<dbReference type="InterPro" id="IPR027266">
    <property type="entry name" value="TrmE/GcvT_dom1"/>
</dbReference>
<dbReference type="NCBIfam" id="TIGR00450">
    <property type="entry name" value="mnmE_trmE_thdF"/>
    <property type="match status" value="1"/>
</dbReference>
<dbReference type="NCBIfam" id="TIGR00231">
    <property type="entry name" value="small_GTP"/>
    <property type="match status" value="1"/>
</dbReference>
<dbReference type="PANTHER" id="PTHR42714">
    <property type="entry name" value="TRNA MODIFICATION GTPASE GTPBP3"/>
    <property type="match status" value="1"/>
</dbReference>
<dbReference type="PANTHER" id="PTHR42714:SF2">
    <property type="entry name" value="TRNA MODIFICATION GTPASE GTPBP3, MITOCHONDRIAL"/>
    <property type="match status" value="1"/>
</dbReference>
<dbReference type="Pfam" id="PF01926">
    <property type="entry name" value="MMR_HSR1"/>
    <property type="match status" value="1"/>
</dbReference>
<dbReference type="Pfam" id="PF12631">
    <property type="entry name" value="MnmE_helical"/>
    <property type="match status" value="1"/>
</dbReference>
<dbReference type="Pfam" id="PF10396">
    <property type="entry name" value="TrmE_N"/>
    <property type="match status" value="1"/>
</dbReference>
<dbReference type="SUPFAM" id="SSF52540">
    <property type="entry name" value="P-loop containing nucleoside triphosphate hydrolases"/>
    <property type="match status" value="1"/>
</dbReference>
<dbReference type="PROSITE" id="PS51709">
    <property type="entry name" value="G_TRME"/>
    <property type="match status" value="1"/>
</dbReference>
<name>MNME_CHLCV</name>